<keyword id="KW-0028">Amino-acid biosynthesis</keyword>
<keyword id="KW-0198">Cysteine biosynthesis</keyword>
<keyword id="KW-0963">Cytoplasm</keyword>
<keyword id="KW-0663">Pyridoxal phosphate</keyword>
<keyword id="KW-1185">Reference proteome</keyword>
<keyword id="KW-0808">Transferase</keyword>
<evidence type="ECO:0000250" key="1"/>
<evidence type="ECO:0000305" key="2"/>
<evidence type="ECO:0000312" key="3">
    <source>
        <dbReference type="EMBL" id="ABF98862.1"/>
    </source>
</evidence>
<evidence type="ECO:0000312" key="4">
    <source>
        <dbReference type="EMBL" id="BAF13176.1"/>
    </source>
</evidence>
<comment type="catalytic activity">
    <reaction>
        <text>O-acetyl-L-serine + hydrogen sulfide = L-cysteine + acetate</text>
        <dbReference type="Rhea" id="RHEA:14829"/>
        <dbReference type="ChEBI" id="CHEBI:29919"/>
        <dbReference type="ChEBI" id="CHEBI:30089"/>
        <dbReference type="ChEBI" id="CHEBI:35235"/>
        <dbReference type="ChEBI" id="CHEBI:58340"/>
        <dbReference type="EC" id="2.5.1.47"/>
    </reaction>
</comment>
<comment type="cofactor">
    <cofactor evidence="1">
        <name>pyridoxal 5'-phosphate</name>
        <dbReference type="ChEBI" id="CHEBI:597326"/>
    </cofactor>
</comment>
<comment type="pathway">
    <text>Amino-acid biosynthesis; L-cysteine biosynthesis; L-cysteine from L-serine: step 2/2.</text>
</comment>
<comment type="subunit">
    <text evidence="1">Homodimer.</text>
</comment>
<comment type="subcellular location">
    <subcellularLocation>
        <location evidence="1">Cytoplasm</location>
    </subcellularLocation>
</comment>
<comment type="similarity">
    <text evidence="2">Belongs to the cysteine synthase/cystathionine beta-synthase family.</text>
</comment>
<comment type="sequence caution" evidence="2">
    <conflict type="erroneous gene model prediction">
        <sequence resource="EMBL-CDS" id="AAL58961"/>
    </conflict>
</comment>
<sequence length="325" mass="34307">MAESGQSIASDVTALIGNTPLVYLNKVVDGCEAQIAAKLEIMEPCSSVKDRIGYSMITDAEEKGLITPGKSVLIEPTSGNTGIGLAFMAAAKGYKLILTMPASMSMERRIILKAFGAELVLTDPLLGMKGAIQKADELAAKMPNSYILQQFENPANPKIHYETTGPEIWKATAGKVDILVSGIGTGGTVTGTGKYLKEQNPEIKIYGVEPTESAILSGGRPGPHKIQGIGAGFVPGVLDVNLLDEVVQVSSDEAISMAKQLALKEGLLVGISSGAAAVAAIRVAQRPENKGKLVVVVFPSFGERYLSSVLFESIKREAENMVFEP</sequence>
<dbReference type="EC" id="2.5.1.47"/>
<dbReference type="EMBL" id="AF073697">
    <property type="protein sequence ID" value="AAD23909.1"/>
    <property type="molecule type" value="mRNA"/>
</dbReference>
<dbReference type="EMBL" id="AC087852">
    <property type="protein sequence ID" value="AAK71541.1"/>
    <property type="molecule type" value="Genomic_DNA"/>
</dbReference>
<dbReference type="EMBL" id="AC091811">
    <property type="protein sequence ID" value="AAL58961.1"/>
    <property type="status" value="ALT_SEQ"/>
    <property type="molecule type" value="Genomic_DNA"/>
</dbReference>
<dbReference type="EMBL" id="DP000009">
    <property type="protein sequence ID" value="ABF98862.1"/>
    <property type="molecule type" value="Genomic_DNA"/>
</dbReference>
<dbReference type="EMBL" id="DP000009">
    <property type="protein sequence ID" value="ABF98864.1"/>
    <property type="molecule type" value="Genomic_DNA"/>
</dbReference>
<dbReference type="EMBL" id="AP008209">
    <property type="protein sequence ID" value="BAF13176.1"/>
    <property type="molecule type" value="Genomic_DNA"/>
</dbReference>
<dbReference type="EMBL" id="AP014959">
    <property type="protein sequence ID" value="BAS86372.1"/>
    <property type="molecule type" value="Genomic_DNA"/>
</dbReference>
<dbReference type="RefSeq" id="XP_015633055.1">
    <property type="nucleotide sequence ID" value="XM_015777569.1"/>
</dbReference>
<dbReference type="RefSeq" id="XP_015633056.1">
    <property type="nucleotide sequence ID" value="XM_015777570.1"/>
</dbReference>
<dbReference type="SMR" id="Q9XEA8"/>
<dbReference type="FunCoup" id="Q9XEA8">
    <property type="interactions" value="2114"/>
</dbReference>
<dbReference type="STRING" id="39947.Q9XEA8"/>
<dbReference type="PaxDb" id="39947-Q9XEA8"/>
<dbReference type="EnsemblPlants" id="Os03t0747800-01">
    <property type="protein sequence ID" value="Os03t0747800-01"/>
    <property type="gene ID" value="Os03g0747800"/>
</dbReference>
<dbReference type="Gramene" id="Os03t0747800-01">
    <property type="protein sequence ID" value="Os03t0747800-01"/>
    <property type="gene ID" value="Os03g0747800"/>
</dbReference>
<dbReference type="KEGG" id="dosa:Os03g0747800"/>
<dbReference type="eggNOG" id="KOG1252">
    <property type="taxonomic scope" value="Eukaryota"/>
</dbReference>
<dbReference type="HOGENOM" id="CLU_021018_1_0_1"/>
<dbReference type="InParanoid" id="Q9XEA8"/>
<dbReference type="OMA" id="MEPPANE"/>
<dbReference type="OrthoDB" id="10259545at2759"/>
<dbReference type="BRENDA" id="2.5.1.47">
    <property type="organism ID" value="8948"/>
</dbReference>
<dbReference type="PlantReactome" id="R-OSA-1119331">
    <property type="pathway name" value="Cysteine biosynthesis I"/>
</dbReference>
<dbReference type="UniPathway" id="UPA00136">
    <property type="reaction ID" value="UER00200"/>
</dbReference>
<dbReference type="Proteomes" id="UP000000763">
    <property type="component" value="Chromosome 3"/>
</dbReference>
<dbReference type="Proteomes" id="UP000059680">
    <property type="component" value="Chromosome 3"/>
</dbReference>
<dbReference type="GO" id="GO:0005737">
    <property type="term" value="C:cytoplasm"/>
    <property type="evidence" value="ECO:0000318"/>
    <property type="project" value="GO_Central"/>
</dbReference>
<dbReference type="GO" id="GO:0004124">
    <property type="term" value="F:cysteine synthase activity"/>
    <property type="evidence" value="ECO:0000318"/>
    <property type="project" value="GO_Central"/>
</dbReference>
<dbReference type="GO" id="GO:0006535">
    <property type="term" value="P:cysteine biosynthetic process from serine"/>
    <property type="evidence" value="ECO:0000318"/>
    <property type="project" value="GO_Central"/>
</dbReference>
<dbReference type="CDD" id="cd01561">
    <property type="entry name" value="CBS_like"/>
    <property type="match status" value="1"/>
</dbReference>
<dbReference type="FunFam" id="3.40.50.1100:FF:000006">
    <property type="entry name" value="Cysteine synthase"/>
    <property type="match status" value="1"/>
</dbReference>
<dbReference type="FunFam" id="3.40.50.1100:FF:000130">
    <property type="entry name" value="Cysteine synthase"/>
    <property type="match status" value="1"/>
</dbReference>
<dbReference type="Gene3D" id="3.40.50.1100">
    <property type="match status" value="2"/>
</dbReference>
<dbReference type="InterPro" id="IPR005856">
    <property type="entry name" value="Cys_synth"/>
</dbReference>
<dbReference type="InterPro" id="IPR050214">
    <property type="entry name" value="Cys_Synth/Cystath_Beta-Synth"/>
</dbReference>
<dbReference type="InterPro" id="IPR005859">
    <property type="entry name" value="CysK"/>
</dbReference>
<dbReference type="InterPro" id="IPR001216">
    <property type="entry name" value="P-phosphate_BS"/>
</dbReference>
<dbReference type="InterPro" id="IPR001926">
    <property type="entry name" value="TrpB-like_PALP"/>
</dbReference>
<dbReference type="InterPro" id="IPR036052">
    <property type="entry name" value="TrpB-like_PALP_sf"/>
</dbReference>
<dbReference type="NCBIfam" id="TIGR01139">
    <property type="entry name" value="cysK"/>
    <property type="match status" value="1"/>
</dbReference>
<dbReference type="NCBIfam" id="TIGR01136">
    <property type="entry name" value="cysKM"/>
    <property type="match status" value="1"/>
</dbReference>
<dbReference type="PANTHER" id="PTHR10314">
    <property type="entry name" value="CYSTATHIONINE BETA-SYNTHASE"/>
    <property type="match status" value="1"/>
</dbReference>
<dbReference type="Pfam" id="PF00291">
    <property type="entry name" value="PALP"/>
    <property type="match status" value="1"/>
</dbReference>
<dbReference type="SUPFAM" id="SSF53686">
    <property type="entry name" value="Tryptophan synthase beta subunit-like PLP-dependent enzymes"/>
    <property type="match status" value="1"/>
</dbReference>
<dbReference type="PROSITE" id="PS00901">
    <property type="entry name" value="CYS_SYNTHASE"/>
    <property type="match status" value="1"/>
</dbReference>
<protein>
    <recommendedName>
        <fullName>Cysteine synthase</fullName>
        <shortName>CSase</shortName>
        <ecNumber>2.5.1.47</ecNumber>
    </recommendedName>
    <alternativeName>
        <fullName>O-acetylserine (thiol)-lyase</fullName>
        <shortName>OAS-TL</shortName>
    </alternativeName>
    <alternativeName>
        <fullName>O-acetylserine sulfhydrylase</fullName>
    </alternativeName>
</protein>
<accession>Q9XEA8</accession>
<accession>A0A0P0W3J8</accession>
<accession>Q10CX6</accession>
<accession>Q7G7J5</accession>
<accession>Q8W313</accession>
<gene>
    <name type="primary">RCS3</name>
    <name evidence="4" type="ordered locus">Os03g0747800</name>
    <name evidence="3" type="ordered locus">LOC_Os03g53650</name>
    <name type="ORF">OJ1124_H03.2</name>
    <name type="ORF">OSJNBa0069E14.1</name>
</gene>
<proteinExistence type="evidence at transcript level"/>
<name>CYSK2_ORYSJ</name>
<organism>
    <name type="scientific">Oryza sativa subsp. japonica</name>
    <name type="common">Rice</name>
    <dbReference type="NCBI Taxonomy" id="39947"/>
    <lineage>
        <taxon>Eukaryota</taxon>
        <taxon>Viridiplantae</taxon>
        <taxon>Streptophyta</taxon>
        <taxon>Embryophyta</taxon>
        <taxon>Tracheophyta</taxon>
        <taxon>Spermatophyta</taxon>
        <taxon>Magnoliopsida</taxon>
        <taxon>Liliopsida</taxon>
        <taxon>Poales</taxon>
        <taxon>Poaceae</taxon>
        <taxon>BOP clade</taxon>
        <taxon>Oryzoideae</taxon>
        <taxon>Oryzeae</taxon>
        <taxon>Oryzinae</taxon>
        <taxon>Oryza</taxon>
        <taxon>Oryza sativa</taxon>
    </lineage>
</organism>
<feature type="chain" id="PRO_0000167122" description="Cysteine synthase">
    <location>
        <begin position="1"/>
        <end position="325"/>
    </location>
</feature>
<feature type="binding site" evidence="1">
    <location>
        <position position="80"/>
    </location>
    <ligand>
        <name>pyridoxal 5'-phosphate</name>
        <dbReference type="ChEBI" id="CHEBI:597326"/>
    </ligand>
</feature>
<feature type="binding site" evidence="1">
    <location>
        <begin position="184"/>
        <end position="188"/>
    </location>
    <ligand>
        <name>pyridoxal 5'-phosphate</name>
        <dbReference type="ChEBI" id="CHEBI:597326"/>
    </ligand>
</feature>
<feature type="binding site" evidence="1">
    <location>
        <position position="272"/>
    </location>
    <ligand>
        <name>pyridoxal 5'-phosphate</name>
        <dbReference type="ChEBI" id="CHEBI:597326"/>
    </ligand>
</feature>
<feature type="modified residue" description="N6-(pyridoxal phosphate)lysine" evidence="1">
    <location>
        <position position="49"/>
    </location>
</feature>
<reference key="1">
    <citation type="journal article" date="1999" name="Gene">
        <title>Four rice genes encoding cysteine synthase: isolation and differential responses to sulfur, nitrogen and light.</title>
        <authorList>
            <person name="Nakamura T."/>
            <person name="Yamaguchi Y."/>
            <person name="Sano H."/>
        </authorList>
    </citation>
    <scope>NUCLEOTIDE SEQUENCE [MRNA]</scope>
    <source>
        <strain>cv. Nipponbare</strain>
    </source>
</reference>
<reference key="2">
    <citation type="journal article" date="2005" name="Genome Res.">
        <title>Sequence, annotation, and analysis of synteny between rice chromosome 3 and diverged grass species.</title>
        <authorList>
            <consortium name="The rice chromosome 3 sequencing consortium"/>
            <person name="Buell C.R."/>
            <person name="Yuan Q."/>
            <person name="Ouyang S."/>
            <person name="Liu J."/>
            <person name="Zhu W."/>
            <person name="Wang A."/>
            <person name="Maiti R."/>
            <person name="Haas B."/>
            <person name="Wortman J."/>
            <person name="Pertea M."/>
            <person name="Jones K.M."/>
            <person name="Kim M."/>
            <person name="Overton L."/>
            <person name="Tsitrin T."/>
            <person name="Fadrosh D."/>
            <person name="Bera J."/>
            <person name="Weaver B."/>
            <person name="Jin S."/>
            <person name="Johri S."/>
            <person name="Reardon M."/>
            <person name="Webb K."/>
            <person name="Hill J."/>
            <person name="Moffat K."/>
            <person name="Tallon L."/>
            <person name="Van Aken S."/>
            <person name="Lewis M."/>
            <person name="Utterback T."/>
            <person name="Feldblyum T."/>
            <person name="Zismann V."/>
            <person name="Iobst S."/>
            <person name="Hsiao J."/>
            <person name="de Vazeille A.R."/>
            <person name="Salzberg S.L."/>
            <person name="White O."/>
            <person name="Fraser C.M."/>
            <person name="Yu Y."/>
            <person name="Kim H."/>
            <person name="Rambo T."/>
            <person name="Currie J."/>
            <person name="Collura K."/>
            <person name="Kernodle-Thompson S."/>
            <person name="Wei F."/>
            <person name="Kudrna K."/>
            <person name="Ammiraju J.S.S."/>
            <person name="Luo M."/>
            <person name="Goicoechea J.L."/>
            <person name="Wing R.A."/>
            <person name="Henry D."/>
            <person name="Oates R."/>
            <person name="Palmer M."/>
            <person name="Pries G."/>
            <person name="Saski C."/>
            <person name="Simmons J."/>
            <person name="Soderlund C."/>
            <person name="Nelson W."/>
            <person name="de la Bastide M."/>
            <person name="Spiegel L."/>
            <person name="Nascimento L."/>
            <person name="Huang E."/>
            <person name="Preston R."/>
            <person name="Zutavern T."/>
            <person name="Palmer L."/>
            <person name="O'Shaughnessy A."/>
            <person name="Dike S."/>
            <person name="McCombie W.R."/>
            <person name="Minx P."/>
            <person name="Cordum H."/>
            <person name="Wilson R."/>
            <person name="Jin W."/>
            <person name="Lee H.R."/>
            <person name="Jiang J."/>
            <person name="Jackson S."/>
        </authorList>
    </citation>
    <scope>NUCLEOTIDE SEQUENCE [LARGE SCALE GENOMIC DNA]</scope>
    <source>
        <strain>cv. Nipponbare</strain>
    </source>
</reference>
<reference key="3">
    <citation type="journal article" date="2005" name="Nature">
        <title>The map-based sequence of the rice genome.</title>
        <authorList>
            <consortium name="International rice genome sequencing project (IRGSP)"/>
        </authorList>
    </citation>
    <scope>NUCLEOTIDE SEQUENCE [LARGE SCALE GENOMIC DNA]</scope>
    <source>
        <strain>cv. Nipponbare</strain>
    </source>
</reference>
<reference key="4">
    <citation type="journal article" date="2008" name="Nucleic Acids Res.">
        <title>The rice annotation project database (RAP-DB): 2008 update.</title>
        <authorList>
            <consortium name="The rice annotation project (RAP)"/>
        </authorList>
    </citation>
    <scope>GENOME REANNOTATION</scope>
    <source>
        <strain>cv. Nipponbare</strain>
    </source>
</reference>
<reference key="5">
    <citation type="journal article" date="2013" name="Rice">
        <title>Improvement of the Oryza sativa Nipponbare reference genome using next generation sequence and optical map data.</title>
        <authorList>
            <person name="Kawahara Y."/>
            <person name="de la Bastide M."/>
            <person name="Hamilton J.P."/>
            <person name="Kanamori H."/>
            <person name="McCombie W.R."/>
            <person name="Ouyang S."/>
            <person name="Schwartz D.C."/>
            <person name="Tanaka T."/>
            <person name="Wu J."/>
            <person name="Zhou S."/>
            <person name="Childs K.L."/>
            <person name="Davidson R.M."/>
            <person name="Lin H."/>
            <person name="Quesada-Ocampo L."/>
            <person name="Vaillancourt B."/>
            <person name="Sakai H."/>
            <person name="Lee S.S."/>
            <person name="Kim J."/>
            <person name="Numa H."/>
            <person name="Itoh T."/>
            <person name="Buell C.R."/>
            <person name="Matsumoto T."/>
        </authorList>
    </citation>
    <scope>GENOME REANNOTATION</scope>
    <source>
        <strain>cv. Nipponbare</strain>
    </source>
</reference>